<evidence type="ECO:0000255" key="1">
    <source>
        <dbReference type="HAMAP-Rule" id="MF_01172"/>
    </source>
</evidence>
<keyword id="KW-0056">Arginine metabolism</keyword>
<keyword id="KW-0378">Hydrolase</keyword>
<accession>B7M1F7</accession>
<reference key="1">
    <citation type="journal article" date="2009" name="PLoS Genet.">
        <title>Organised genome dynamics in the Escherichia coli species results in highly diverse adaptive paths.</title>
        <authorList>
            <person name="Touchon M."/>
            <person name="Hoede C."/>
            <person name="Tenaillon O."/>
            <person name="Barbe V."/>
            <person name="Baeriswyl S."/>
            <person name="Bidet P."/>
            <person name="Bingen E."/>
            <person name="Bonacorsi S."/>
            <person name="Bouchier C."/>
            <person name="Bouvet O."/>
            <person name="Calteau A."/>
            <person name="Chiapello H."/>
            <person name="Clermont O."/>
            <person name="Cruveiller S."/>
            <person name="Danchin A."/>
            <person name="Diard M."/>
            <person name="Dossat C."/>
            <person name="Karoui M.E."/>
            <person name="Frapy E."/>
            <person name="Garry L."/>
            <person name="Ghigo J.M."/>
            <person name="Gilles A.M."/>
            <person name="Johnson J."/>
            <person name="Le Bouguenec C."/>
            <person name="Lescat M."/>
            <person name="Mangenot S."/>
            <person name="Martinez-Jehanne V."/>
            <person name="Matic I."/>
            <person name="Nassif X."/>
            <person name="Oztas S."/>
            <person name="Petit M.A."/>
            <person name="Pichon C."/>
            <person name="Rouy Z."/>
            <person name="Ruf C.S."/>
            <person name="Schneider D."/>
            <person name="Tourret J."/>
            <person name="Vacherie B."/>
            <person name="Vallenet D."/>
            <person name="Medigue C."/>
            <person name="Rocha E.P.C."/>
            <person name="Denamur E."/>
        </authorList>
    </citation>
    <scope>NUCLEOTIDE SEQUENCE [LARGE SCALE GENOMIC DNA]</scope>
    <source>
        <strain>IAI1</strain>
    </source>
</reference>
<protein>
    <recommendedName>
        <fullName evidence="1">N-succinylarginine dihydrolase</fullName>
        <ecNumber evidence="1">3.5.3.23</ecNumber>
    </recommendedName>
</protein>
<proteinExistence type="inferred from homology"/>
<name>ASTB_ECO8A</name>
<gene>
    <name evidence="1" type="primary">astB</name>
    <name type="ordered locus">ECIAI1_1806</name>
</gene>
<sequence length="447" mass="49324">MNAWEVNFDGLVGLTHHYAGLSFGNEASTRHRFQVSNPRQAAKQGLLKMKALADAGFPQAVIPPHERPFIPVLRQLGFSGSDEQVLEKVARQAPHWLSSVSSASPMWVANAATIAPSADTLDGKVHLTVANLNNKFHRSLEAHVTESLLKAIFNDEEKFSVHSALPQVALLGDEGAANHNRLGGHYGEPGMQLFVYGREEGNDTRPSRYPARQTREASEAVARLNQVNPQQVIFAQQNPDVIDQGVFHNDVIAVSNRQVLFCHQQAFARQSQLLANLRARVNGFMAIEVPATQVSVSDAVSTYLFNSQLLSRDDGSMMLVLPQECREHAGVWGYLNELLAADNPISELKVFDLRESMANGGGPACLRLRVVLTEEERRAVNPAVMMNDTLFNALNDWVDRYYRDRLTAADLADPQLLREGREALDVLSQLLNLGSVYPFQREGGGNG</sequence>
<comment type="function">
    <text evidence="1">Catalyzes the hydrolysis of N(2)-succinylarginine into N(2)-succinylornithine, ammonia and CO(2).</text>
</comment>
<comment type="catalytic activity">
    <reaction evidence="1">
        <text>N(2)-succinyl-L-arginine + 2 H2O + 2 H(+) = N(2)-succinyl-L-ornithine + 2 NH4(+) + CO2</text>
        <dbReference type="Rhea" id="RHEA:19533"/>
        <dbReference type="ChEBI" id="CHEBI:15377"/>
        <dbReference type="ChEBI" id="CHEBI:15378"/>
        <dbReference type="ChEBI" id="CHEBI:16526"/>
        <dbReference type="ChEBI" id="CHEBI:28938"/>
        <dbReference type="ChEBI" id="CHEBI:58241"/>
        <dbReference type="ChEBI" id="CHEBI:58514"/>
        <dbReference type="EC" id="3.5.3.23"/>
    </reaction>
</comment>
<comment type="pathway">
    <text evidence="1">Amino-acid degradation; L-arginine degradation via AST pathway; L-glutamate and succinate from L-arginine: step 2/5.</text>
</comment>
<comment type="subunit">
    <text evidence="1">Homodimer.</text>
</comment>
<comment type="similarity">
    <text evidence="1">Belongs to the succinylarginine dihydrolase family.</text>
</comment>
<organism>
    <name type="scientific">Escherichia coli O8 (strain IAI1)</name>
    <dbReference type="NCBI Taxonomy" id="585034"/>
    <lineage>
        <taxon>Bacteria</taxon>
        <taxon>Pseudomonadati</taxon>
        <taxon>Pseudomonadota</taxon>
        <taxon>Gammaproteobacteria</taxon>
        <taxon>Enterobacterales</taxon>
        <taxon>Enterobacteriaceae</taxon>
        <taxon>Escherichia</taxon>
    </lineage>
</organism>
<dbReference type="EC" id="3.5.3.23" evidence="1"/>
<dbReference type="EMBL" id="CU928160">
    <property type="protein sequence ID" value="CAQ98662.1"/>
    <property type="molecule type" value="Genomic_DNA"/>
</dbReference>
<dbReference type="RefSeq" id="WP_000995005.1">
    <property type="nucleotide sequence ID" value="NC_011741.1"/>
</dbReference>
<dbReference type="SMR" id="B7M1F7"/>
<dbReference type="KEGG" id="ecr:ECIAI1_1806"/>
<dbReference type="HOGENOM" id="CLU_053835_0_0_6"/>
<dbReference type="UniPathway" id="UPA00185">
    <property type="reaction ID" value="UER00280"/>
</dbReference>
<dbReference type="GO" id="GO:0009015">
    <property type="term" value="F:N-succinylarginine dihydrolase activity"/>
    <property type="evidence" value="ECO:0007669"/>
    <property type="project" value="UniProtKB-UniRule"/>
</dbReference>
<dbReference type="GO" id="GO:0019544">
    <property type="term" value="P:arginine catabolic process to glutamate"/>
    <property type="evidence" value="ECO:0007669"/>
    <property type="project" value="UniProtKB-UniRule"/>
</dbReference>
<dbReference type="GO" id="GO:0019545">
    <property type="term" value="P:arginine catabolic process to succinate"/>
    <property type="evidence" value="ECO:0007669"/>
    <property type="project" value="UniProtKB-UniRule"/>
</dbReference>
<dbReference type="FunFam" id="3.75.10.20:FF:000001">
    <property type="entry name" value="N-succinylarginine dihydrolase"/>
    <property type="match status" value="1"/>
</dbReference>
<dbReference type="Gene3D" id="3.75.10.20">
    <property type="entry name" value="Succinylarginine dihydrolase"/>
    <property type="match status" value="1"/>
</dbReference>
<dbReference type="HAMAP" id="MF_01172">
    <property type="entry name" value="AstB"/>
    <property type="match status" value="1"/>
</dbReference>
<dbReference type="InterPro" id="IPR037031">
    <property type="entry name" value="AstB_sf"/>
</dbReference>
<dbReference type="InterPro" id="IPR007079">
    <property type="entry name" value="SuccinylArg_d-Hdrlase_AstB"/>
</dbReference>
<dbReference type="NCBIfam" id="TIGR03241">
    <property type="entry name" value="arg_catab_astB"/>
    <property type="match status" value="1"/>
</dbReference>
<dbReference type="NCBIfam" id="NF009789">
    <property type="entry name" value="PRK13281.1"/>
    <property type="match status" value="1"/>
</dbReference>
<dbReference type="PANTHER" id="PTHR30420">
    <property type="entry name" value="N-SUCCINYLARGININE DIHYDROLASE"/>
    <property type="match status" value="1"/>
</dbReference>
<dbReference type="PANTHER" id="PTHR30420:SF2">
    <property type="entry name" value="N-SUCCINYLARGININE DIHYDROLASE"/>
    <property type="match status" value="1"/>
</dbReference>
<dbReference type="Pfam" id="PF04996">
    <property type="entry name" value="AstB"/>
    <property type="match status" value="1"/>
</dbReference>
<dbReference type="SUPFAM" id="SSF55909">
    <property type="entry name" value="Pentein"/>
    <property type="match status" value="1"/>
</dbReference>
<feature type="chain" id="PRO_1000138012" description="N-succinylarginine dihydrolase">
    <location>
        <begin position="1"/>
        <end position="447"/>
    </location>
</feature>
<feature type="active site" evidence="1">
    <location>
        <position position="174"/>
    </location>
</feature>
<feature type="active site" evidence="1">
    <location>
        <position position="248"/>
    </location>
</feature>
<feature type="active site" description="Nucleophile" evidence="1">
    <location>
        <position position="365"/>
    </location>
</feature>
<feature type="binding site" evidence="1">
    <location>
        <begin position="19"/>
        <end position="28"/>
    </location>
    <ligand>
        <name>substrate</name>
    </ligand>
</feature>
<feature type="binding site" evidence="1">
    <location>
        <position position="110"/>
    </location>
    <ligand>
        <name>substrate</name>
    </ligand>
</feature>
<feature type="binding site" evidence="1">
    <location>
        <begin position="137"/>
        <end position="138"/>
    </location>
    <ligand>
        <name>substrate</name>
    </ligand>
</feature>
<feature type="binding site" evidence="1">
    <location>
        <position position="212"/>
    </location>
    <ligand>
        <name>substrate</name>
    </ligand>
</feature>
<feature type="binding site" evidence="1">
    <location>
        <position position="250"/>
    </location>
    <ligand>
        <name>substrate</name>
    </ligand>
</feature>
<feature type="binding site" evidence="1">
    <location>
        <position position="359"/>
    </location>
    <ligand>
        <name>substrate</name>
    </ligand>
</feature>